<evidence type="ECO:0000255" key="1">
    <source>
        <dbReference type="HAMAP-Rule" id="MF_01325"/>
    </source>
</evidence>
<evidence type="ECO:0000256" key="2">
    <source>
        <dbReference type="SAM" id="MobiDB-lite"/>
    </source>
</evidence>
<evidence type="ECO:0000305" key="3"/>
<keyword id="KW-0488">Methylation</keyword>
<keyword id="KW-1185">Reference proteome</keyword>
<keyword id="KW-0687">Ribonucleoprotein</keyword>
<keyword id="KW-0689">Ribosomal protein</keyword>
<keyword id="KW-0694">RNA-binding</keyword>
<keyword id="KW-0699">rRNA-binding</keyword>
<reference key="1">
    <citation type="journal article" date="2004" name="Science">
        <title>The genomic sequence of the accidental pathogen Legionella pneumophila.</title>
        <authorList>
            <person name="Chien M."/>
            <person name="Morozova I."/>
            <person name="Shi S."/>
            <person name="Sheng H."/>
            <person name="Chen J."/>
            <person name="Gomez S.M."/>
            <person name="Asamani G."/>
            <person name="Hill K."/>
            <person name="Nuara J."/>
            <person name="Feder M."/>
            <person name="Rineer J."/>
            <person name="Greenberg J.J."/>
            <person name="Steshenko V."/>
            <person name="Park S.H."/>
            <person name="Zhao B."/>
            <person name="Teplitskaya E."/>
            <person name="Edwards J.R."/>
            <person name="Pampou S."/>
            <person name="Georghiou A."/>
            <person name="Chou I.-C."/>
            <person name="Iannuccilli W."/>
            <person name="Ulz M.E."/>
            <person name="Kim D.H."/>
            <person name="Geringer-Sameth A."/>
            <person name="Goldsberry C."/>
            <person name="Morozov P."/>
            <person name="Fischer S.G."/>
            <person name="Segal G."/>
            <person name="Qu X."/>
            <person name="Rzhetsky A."/>
            <person name="Zhang P."/>
            <person name="Cayanis E."/>
            <person name="De Jong P.J."/>
            <person name="Ju J."/>
            <person name="Kalachikov S."/>
            <person name="Shuman H.A."/>
            <person name="Russo J.J."/>
        </authorList>
    </citation>
    <scope>NUCLEOTIDE SEQUENCE [LARGE SCALE GENOMIC DNA]</scope>
    <source>
        <strain>Philadelphia 1 / ATCC 33152 / DSM 7513</strain>
    </source>
</reference>
<gene>
    <name evidence="1" type="primary">rplC</name>
    <name type="ordered locus">lpg0329</name>
</gene>
<protein>
    <recommendedName>
        <fullName evidence="1">Large ribosomal subunit protein uL3</fullName>
    </recommendedName>
    <alternativeName>
        <fullName evidence="3">50S ribosomal protein L3</fullName>
    </alternativeName>
</protein>
<comment type="function">
    <text evidence="1">One of the primary rRNA binding proteins, it binds directly near the 3'-end of the 23S rRNA, where it nucleates assembly of the 50S subunit.</text>
</comment>
<comment type="subunit">
    <text evidence="1">Part of the 50S ribosomal subunit. Forms a cluster with proteins L14 and L19.</text>
</comment>
<comment type="PTM">
    <text evidence="1">Methylated by PrmB.</text>
</comment>
<comment type="similarity">
    <text evidence="1">Belongs to the universal ribosomal protein uL3 family.</text>
</comment>
<sequence length="216" mass="22896">MMIGLLGRKIGMTRVFTPEGVSVPVSVVEVQPNRVSQVKTAANDGYSAVQLTGGTKKSSKVSKPVAGHFAKAQIDAGDMQVEFRIDSEDAFTPGQVISVADVFTAGQYVDVSGLTKGKGFAGTVKRHNFRTQDASHGNSRSHRVPGSIGQNQTPGRVFKGKKMAGHMGNARCTIQSLELVKVDSERNLLLIKGAIPGAPGSRVEIKPAVKKQARGE</sequence>
<proteinExistence type="inferred from homology"/>
<dbReference type="EMBL" id="AE017354">
    <property type="protein sequence ID" value="AAU26426.1"/>
    <property type="molecule type" value="Genomic_DNA"/>
</dbReference>
<dbReference type="RefSeq" id="YP_094373.2">
    <property type="nucleotide sequence ID" value="NC_002942.5"/>
</dbReference>
<dbReference type="SMR" id="Q5ZYP3"/>
<dbReference type="STRING" id="272624.lpg0329"/>
<dbReference type="PaxDb" id="272624-lpg0329"/>
<dbReference type="KEGG" id="lpn:lpg0329"/>
<dbReference type="eggNOG" id="COG0087">
    <property type="taxonomic scope" value="Bacteria"/>
</dbReference>
<dbReference type="HOGENOM" id="CLU_044142_4_1_6"/>
<dbReference type="OrthoDB" id="9806135at2"/>
<dbReference type="Proteomes" id="UP000000609">
    <property type="component" value="Chromosome"/>
</dbReference>
<dbReference type="GO" id="GO:0022625">
    <property type="term" value="C:cytosolic large ribosomal subunit"/>
    <property type="evidence" value="ECO:0007669"/>
    <property type="project" value="TreeGrafter"/>
</dbReference>
<dbReference type="GO" id="GO:0019843">
    <property type="term" value="F:rRNA binding"/>
    <property type="evidence" value="ECO:0007669"/>
    <property type="project" value="UniProtKB-UniRule"/>
</dbReference>
<dbReference type="GO" id="GO:0003735">
    <property type="term" value="F:structural constituent of ribosome"/>
    <property type="evidence" value="ECO:0007669"/>
    <property type="project" value="InterPro"/>
</dbReference>
<dbReference type="GO" id="GO:0006412">
    <property type="term" value="P:translation"/>
    <property type="evidence" value="ECO:0007669"/>
    <property type="project" value="UniProtKB-UniRule"/>
</dbReference>
<dbReference type="FunFam" id="2.40.30.10:FF:000004">
    <property type="entry name" value="50S ribosomal protein L3"/>
    <property type="match status" value="1"/>
</dbReference>
<dbReference type="FunFam" id="3.30.160.810:FF:000001">
    <property type="entry name" value="50S ribosomal protein L3"/>
    <property type="match status" value="1"/>
</dbReference>
<dbReference type="Gene3D" id="3.30.160.810">
    <property type="match status" value="1"/>
</dbReference>
<dbReference type="Gene3D" id="2.40.30.10">
    <property type="entry name" value="Translation factors"/>
    <property type="match status" value="1"/>
</dbReference>
<dbReference type="HAMAP" id="MF_01325_B">
    <property type="entry name" value="Ribosomal_uL3_B"/>
    <property type="match status" value="1"/>
</dbReference>
<dbReference type="InterPro" id="IPR000597">
    <property type="entry name" value="Ribosomal_uL3"/>
</dbReference>
<dbReference type="InterPro" id="IPR019927">
    <property type="entry name" value="Ribosomal_uL3_bac/org-type"/>
</dbReference>
<dbReference type="InterPro" id="IPR019926">
    <property type="entry name" value="Ribosomal_uL3_CS"/>
</dbReference>
<dbReference type="InterPro" id="IPR009000">
    <property type="entry name" value="Transl_B-barrel_sf"/>
</dbReference>
<dbReference type="NCBIfam" id="TIGR03625">
    <property type="entry name" value="L3_bact"/>
    <property type="match status" value="1"/>
</dbReference>
<dbReference type="PANTHER" id="PTHR11229">
    <property type="entry name" value="50S RIBOSOMAL PROTEIN L3"/>
    <property type="match status" value="1"/>
</dbReference>
<dbReference type="PANTHER" id="PTHR11229:SF16">
    <property type="entry name" value="LARGE RIBOSOMAL SUBUNIT PROTEIN UL3C"/>
    <property type="match status" value="1"/>
</dbReference>
<dbReference type="Pfam" id="PF00297">
    <property type="entry name" value="Ribosomal_L3"/>
    <property type="match status" value="1"/>
</dbReference>
<dbReference type="SUPFAM" id="SSF50447">
    <property type="entry name" value="Translation proteins"/>
    <property type="match status" value="1"/>
</dbReference>
<dbReference type="PROSITE" id="PS00474">
    <property type="entry name" value="RIBOSOMAL_L3"/>
    <property type="match status" value="1"/>
</dbReference>
<accession>Q5ZYP3</accession>
<organism>
    <name type="scientific">Legionella pneumophila subsp. pneumophila (strain Philadelphia 1 / ATCC 33152 / DSM 7513)</name>
    <dbReference type="NCBI Taxonomy" id="272624"/>
    <lineage>
        <taxon>Bacteria</taxon>
        <taxon>Pseudomonadati</taxon>
        <taxon>Pseudomonadota</taxon>
        <taxon>Gammaproteobacteria</taxon>
        <taxon>Legionellales</taxon>
        <taxon>Legionellaceae</taxon>
        <taxon>Legionella</taxon>
    </lineage>
</organism>
<name>RL3_LEGPH</name>
<feature type="chain" id="PRO_0000241360" description="Large ribosomal subunit protein uL3">
    <location>
        <begin position="1"/>
        <end position="216"/>
    </location>
</feature>
<feature type="region of interest" description="Disordered" evidence="2">
    <location>
        <begin position="132"/>
        <end position="155"/>
    </location>
</feature>
<feature type="modified residue" description="N5-methylglutamine" evidence="1">
    <location>
        <position position="152"/>
    </location>
</feature>